<comment type="function">
    <text evidence="1">Displays ATPase and GTPase activities.</text>
</comment>
<comment type="similarity">
    <text evidence="1">Belongs to the RapZ-like family.</text>
</comment>
<proteinExistence type="inferred from homology"/>
<dbReference type="EMBL" id="AE002098">
    <property type="protein sequence ID" value="AAF41151.1"/>
    <property type="molecule type" value="Genomic_DNA"/>
</dbReference>
<dbReference type="PIR" id="B81165">
    <property type="entry name" value="B81165"/>
</dbReference>
<dbReference type="RefSeq" id="NP_273780.1">
    <property type="nucleotide sequence ID" value="NC_003112.2"/>
</dbReference>
<dbReference type="RefSeq" id="WP_010980831.1">
    <property type="nucleotide sequence ID" value="NC_003112.2"/>
</dbReference>
<dbReference type="SMR" id="Q9K080"/>
<dbReference type="FunCoup" id="Q9K080">
    <property type="interactions" value="147"/>
</dbReference>
<dbReference type="STRING" id="122586.NMB0738"/>
<dbReference type="PaxDb" id="122586-NMB0738"/>
<dbReference type="KEGG" id="nme:NMB0738"/>
<dbReference type="PATRIC" id="fig|122586.8.peg.938"/>
<dbReference type="HOGENOM" id="CLU_059558_1_1_4"/>
<dbReference type="InParanoid" id="Q9K080"/>
<dbReference type="OrthoDB" id="9784461at2"/>
<dbReference type="Proteomes" id="UP000000425">
    <property type="component" value="Chromosome"/>
</dbReference>
<dbReference type="GO" id="GO:0005524">
    <property type="term" value="F:ATP binding"/>
    <property type="evidence" value="ECO:0007669"/>
    <property type="project" value="UniProtKB-UniRule"/>
</dbReference>
<dbReference type="GO" id="GO:0005525">
    <property type="term" value="F:GTP binding"/>
    <property type="evidence" value="ECO:0007669"/>
    <property type="project" value="UniProtKB-UniRule"/>
</dbReference>
<dbReference type="GO" id="GO:0060090">
    <property type="term" value="F:molecular adaptor activity"/>
    <property type="evidence" value="ECO:0000318"/>
    <property type="project" value="GO_Central"/>
</dbReference>
<dbReference type="Gene3D" id="3.40.50.300">
    <property type="entry name" value="P-loop containing nucleotide triphosphate hydrolases"/>
    <property type="match status" value="1"/>
</dbReference>
<dbReference type="HAMAP" id="MF_00636">
    <property type="entry name" value="RapZ_like"/>
    <property type="match status" value="1"/>
</dbReference>
<dbReference type="InterPro" id="IPR027417">
    <property type="entry name" value="P-loop_NTPase"/>
</dbReference>
<dbReference type="InterPro" id="IPR005337">
    <property type="entry name" value="RapZ-like"/>
</dbReference>
<dbReference type="InterPro" id="IPR053930">
    <property type="entry name" value="RapZ-like_N"/>
</dbReference>
<dbReference type="InterPro" id="IPR053931">
    <property type="entry name" value="RapZ_C"/>
</dbReference>
<dbReference type="NCBIfam" id="NF003828">
    <property type="entry name" value="PRK05416.1"/>
    <property type="match status" value="1"/>
</dbReference>
<dbReference type="PANTHER" id="PTHR30448">
    <property type="entry name" value="RNASE ADAPTER PROTEIN RAPZ"/>
    <property type="match status" value="1"/>
</dbReference>
<dbReference type="PANTHER" id="PTHR30448:SF0">
    <property type="entry name" value="RNASE ADAPTER PROTEIN RAPZ"/>
    <property type="match status" value="1"/>
</dbReference>
<dbReference type="Pfam" id="PF22740">
    <property type="entry name" value="PapZ_C"/>
    <property type="match status" value="1"/>
</dbReference>
<dbReference type="Pfam" id="PF03668">
    <property type="entry name" value="RapZ-like_N"/>
    <property type="match status" value="1"/>
</dbReference>
<dbReference type="PIRSF" id="PIRSF005052">
    <property type="entry name" value="P-loopkin"/>
    <property type="match status" value="1"/>
</dbReference>
<dbReference type="SUPFAM" id="SSF52540">
    <property type="entry name" value="P-loop containing nucleoside triphosphate hydrolases"/>
    <property type="match status" value="1"/>
</dbReference>
<sequence length="284" mass="32831">MKIVLISGLSGSGKSVALRQMEDSGYFCVDNLPLEMLPALVSYHIERADETELAVSVDVRSGIDIGQAREQIASLRRLGHRVEVLFVEAEESVLVRRFSETRRGHPLSNQDMTLLESLKKEREWLFPLKEIAYCIDTSKMNAQQLRHAVRQWLKVERTGLLVILESFGFKYGVPNNADFMFDMRSLPNPYYDPELRPYTGMDKPVWDYLDGQPLVQEMVDDIERFVTHWLPRLEDESRSYVTVAIGCTGGQHRSVYIVEKLARRLKGRYELLIRHRQAQNLSDR</sequence>
<reference key="1">
    <citation type="journal article" date="2000" name="Science">
        <title>Complete genome sequence of Neisseria meningitidis serogroup B strain MC58.</title>
        <authorList>
            <person name="Tettelin H."/>
            <person name="Saunders N.J."/>
            <person name="Heidelberg J.F."/>
            <person name="Jeffries A.C."/>
            <person name="Nelson K.E."/>
            <person name="Eisen J.A."/>
            <person name="Ketchum K.A."/>
            <person name="Hood D.W."/>
            <person name="Peden J.F."/>
            <person name="Dodson R.J."/>
            <person name="Nelson W.C."/>
            <person name="Gwinn M.L."/>
            <person name="DeBoy R.T."/>
            <person name="Peterson J.D."/>
            <person name="Hickey E.K."/>
            <person name="Haft D.H."/>
            <person name="Salzberg S.L."/>
            <person name="White O."/>
            <person name="Fleischmann R.D."/>
            <person name="Dougherty B.A."/>
            <person name="Mason T.M."/>
            <person name="Ciecko A."/>
            <person name="Parksey D.S."/>
            <person name="Blair E."/>
            <person name="Cittone H."/>
            <person name="Clark E.B."/>
            <person name="Cotton M.D."/>
            <person name="Utterback T.R."/>
            <person name="Khouri H.M."/>
            <person name="Qin H."/>
            <person name="Vamathevan J.J."/>
            <person name="Gill J."/>
            <person name="Scarlato V."/>
            <person name="Masignani V."/>
            <person name="Pizza M."/>
            <person name="Grandi G."/>
            <person name="Sun L."/>
            <person name="Smith H.O."/>
            <person name="Fraser C.M."/>
            <person name="Moxon E.R."/>
            <person name="Rappuoli R."/>
            <person name="Venter J.C."/>
        </authorList>
    </citation>
    <scope>NUCLEOTIDE SEQUENCE [LARGE SCALE GENOMIC DNA]</scope>
    <source>
        <strain>ATCC BAA-335 / MC58</strain>
    </source>
</reference>
<evidence type="ECO:0000255" key="1">
    <source>
        <dbReference type="HAMAP-Rule" id="MF_00636"/>
    </source>
</evidence>
<feature type="chain" id="PRO_0000107735" description="Nucleotide-binding protein NMB0738">
    <location>
        <begin position="1"/>
        <end position="284"/>
    </location>
</feature>
<feature type="binding site" evidence="1">
    <location>
        <begin position="8"/>
        <end position="15"/>
    </location>
    <ligand>
        <name>ATP</name>
        <dbReference type="ChEBI" id="CHEBI:30616"/>
    </ligand>
</feature>
<feature type="binding site" evidence="1">
    <location>
        <begin position="58"/>
        <end position="61"/>
    </location>
    <ligand>
        <name>GTP</name>
        <dbReference type="ChEBI" id="CHEBI:37565"/>
    </ligand>
</feature>
<name>Y738_NEIMB</name>
<gene>
    <name type="ordered locus">NMB0738</name>
</gene>
<accession>Q9K080</accession>
<keyword id="KW-0067">ATP-binding</keyword>
<keyword id="KW-0342">GTP-binding</keyword>
<keyword id="KW-0547">Nucleotide-binding</keyword>
<keyword id="KW-1185">Reference proteome</keyword>
<protein>
    <recommendedName>
        <fullName evidence="1">Nucleotide-binding protein NMB0738</fullName>
    </recommendedName>
</protein>
<organism>
    <name type="scientific">Neisseria meningitidis serogroup B (strain ATCC BAA-335 / MC58)</name>
    <dbReference type="NCBI Taxonomy" id="122586"/>
    <lineage>
        <taxon>Bacteria</taxon>
        <taxon>Pseudomonadati</taxon>
        <taxon>Pseudomonadota</taxon>
        <taxon>Betaproteobacteria</taxon>
        <taxon>Neisseriales</taxon>
        <taxon>Neisseriaceae</taxon>
        <taxon>Neisseria</taxon>
    </lineage>
</organism>